<proteinExistence type="inferred from homology"/>
<reference key="1">
    <citation type="journal article" date="2006" name="Proc. Natl. Acad. Sci. U.S.A.">
        <title>Genome reduction in Leptospira borgpetersenii reflects limited transmission potential.</title>
        <authorList>
            <person name="Bulach D.M."/>
            <person name="Zuerner R.L."/>
            <person name="Wilson P."/>
            <person name="Seemann T."/>
            <person name="McGrath A."/>
            <person name="Cullen P.A."/>
            <person name="Davis J."/>
            <person name="Johnson M."/>
            <person name="Kuczek E."/>
            <person name="Alt D.P."/>
            <person name="Peterson-Burch B."/>
            <person name="Coppel R.L."/>
            <person name="Rood J.I."/>
            <person name="Davies J.K."/>
            <person name="Adler B."/>
        </authorList>
    </citation>
    <scope>NUCLEOTIDE SEQUENCE [LARGE SCALE GENOMIC DNA]</scope>
    <source>
        <strain>JB197</strain>
    </source>
</reference>
<name>MNMA_LEPBJ</name>
<gene>
    <name evidence="1" type="primary">mnmA</name>
    <name type="ordered locus">LBJ_0986</name>
</gene>
<keyword id="KW-0067">ATP-binding</keyword>
<keyword id="KW-0963">Cytoplasm</keyword>
<keyword id="KW-1015">Disulfide bond</keyword>
<keyword id="KW-0547">Nucleotide-binding</keyword>
<keyword id="KW-0694">RNA-binding</keyword>
<keyword id="KW-0808">Transferase</keyword>
<keyword id="KW-0819">tRNA processing</keyword>
<keyword id="KW-0820">tRNA-binding</keyword>
<comment type="function">
    <text evidence="1">Catalyzes the 2-thiolation of uridine at the wobble position (U34) of tRNA, leading to the formation of s(2)U34.</text>
</comment>
<comment type="catalytic activity">
    <reaction evidence="1">
        <text>S-sulfanyl-L-cysteinyl-[protein] + uridine(34) in tRNA + AH2 + ATP = 2-thiouridine(34) in tRNA + L-cysteinyl-[protein] + A + AMP + diphosphate + H(+)</text>
        <dbReference type="Rhea" id="RHEA:47032"/>
        <dbReference type="Rhea" id="RHEA-COMP:10131"/>
        <dbReference type="Rhea" id="RHEA-COMP:11726"/>
        <dbReference type="Rhea" id="RHEA-COMP:11727"/>
        <dbReference type="Rhea" id="RHEA-COMP:11728"/>
        <dbReference type="ChEBI" id="CHEBI:13193"/>
        <dbReference type="ChEBI" id="CHEBI:15378"/>
        <dbReference type="ChEBI" id="CHEBI:17499"/>
        <dbReference type="ChEBI" id="CHEBI:29950"/>
        <dbReference type="ChEBI" id="CHEBI:30616"/>
        <dbReference type="ChEBI" id="CHEBI:33019"/>
        <dbReference type="ChEBI" id="CHEBI:61963"/>
        <dbReference type="ChEBI" id="CHEBI:65315"/>
        <dbReference type="ChEBI" id="CHEBI:87170"/>
        <dbReference type="ChEBI" id="CHEBI:456215"/>
        <dbReference type="EC" id="2.8.1.13"/>
    </reaction>
</comment>
<comment type="subcellular location">
    <subcellularLocation>
        <location evidence="1">Cytoplasm</location>
    </subcellularLocation>
</comment>
<comment type="similarity">
    <text evidence="1">Belongs to the MnmA/TRMU family.</text>
</comment>
<organism>
    <name type="scientific">Leptospira borgpetersenii serovar Hardjo-bovis (strain JB197)</name>
    <dbReference type="NCBI Taxonomy" id="355277"/>
    <lineage>
        <taxon>Bacteria</taxon>
        <taxon>Pseudomonadati</taxon>
        <taxon>Spirochaetota</taxon>
        <taxon>Spirochaetia</taxon>
        <taxon>Leptospirales</taxon>
        <taxon>Leptospiraceae</taxon>
        <taxon>Leptospira</taxon>
    </lineage>
</organism>
<accession>Q04TZ4</accession>
<evidence type="ECO:0000255" key="1">
    <source>
        <dbReference type="HAMAP-Rule" id="MF_00144"/>
    </source>
</evidence>
<feature type="chain" id="PRO_0000349684" description="tRNA-specific 2-thiouridylase MnmA">
    <location>
        <begin position="1"/>
        <end position="377"/>
    </location>
</feature>
<feature type="region of interest" description="Interaction with tRNA" evidence="1">
    <location>
        <begin position="151"/>
        <end position="153"/>
    </location>
</feature>
<feature type="region of interest" description="Interaction with tRNA" evidence="1">
    <location>
        <begin position="307"/>
        <end position="308"/>
    </location>
</feature>
<feature type="active site" description="Nucleophile" evidence="1">
    <location>
        <position position="105"/>
    </location>
</feature>
<feature type="active site" description="Cysteine persulfide intermediate" evidence="1">
    <location>
        <position position="201"/>
    </location>
</feature>
<feature type="binding site" evidence="1">
    <location>
        <begin position="9"/>
        <end position="16"/>
    </location>
    <ligand>
        <name>ATP</name>
        <dbReference type="ChEBI" id="CHEBI:30616"/>
    </ligand>
</feature>
<feature type="binding site" evidence="1">
    <location>
        <position position="35"/>
    </location>
    <ligand>
        <name>ATP</name>
        <dbReference type="ChEBI" id="CHEBI:30616"/>
    </ligand>
</feature>
<feature type="binding site" evidence="1">
    <location>
        <position position="129"/>
    </location>
    <ligand>
        <name>ATP</name>
        <dbReference type="ChEBI" id="CHEBI:30616"/>
    </ligand>
</feature>
<feature type="site" description="Interaction with tRNA" evidence="1">
    <location>
        <position position="130"/>
    </location>
</feature>
<feature type="site" description="Interaction with tRNA" evidence="1">
    <location>
        <position position="339"/>
    </location>
</feature>
<feature type="disulfide bond" description="Alternate" evidence="1">
    <location>
        <begin position="105"/>
        <end position="201"/>
    </location>
</feature>
<protein>
    <recommendedName>
        <fullName evidence="1">tRNA-specific 2-thiouridylase MnmA</fullName>
        <ecNumber evidence="1">2.8.1.13</ecNumber>
    </recommendedName>
</protein>
<dbReference type="EC" id="2.8.1.13" evidence="1"/>
<dbReference type="EMBL" id="CP000350">
    <property type="protein sequence ID" value="ABJ75626.1"/>
    <property type="molecule type" value="Genomic_DNA"/>
</dbReference>
<dbReference type="SMR" id="Q04TZ4"/>
<dbReference type="KEGG" id="lbj:LBJ_0986"/>
<dbReference type="HOGENOM" id="CLU_035188_0_0_12"/>
<dbReference type="Proteomes" id="UP000000656">
    <property type="component" value="Chromosome 1"/>
</dbReference>
<dbReference type="GO" id="GO:0005737">
    <property type="term" value="C:cytoplasm"/>
    <property type="evidence" value="ECO:0007669"/>
    <property type="project" value="UniProtKB-SubCell"/>
</dbReference>
<dbReference type="GO" id="GO:0005524">
    <property type="term" value="F:ATP binding"/>
    <property type="evidence" value="ECO:0007669"/>
    <property type="project" value="UniProtKB-KW"/>
</dbReference>
<dbReference type="GO" id="GO:0000049">
    <property type="term" value="F:tRNA binding"/>
    <property type="evidence" value="ECO:0007669"/>
    <property type="project" value="UniProtKB-KW"/>
</dbReference>
<dbReference type="GO" id="GO:0103016">
    <property type="term" value="F:tRNA-uridine 2-sulfurtransferase activity"/>
    <property type="evidence" value="ECO:0007669"/>
    <property type="project" value="UniProtKB-EC"/>
</dbReference>
<dbReference type="GO" id="GO:0002143">
    <property type="term" value="P:tRNA wobble position uridine thiolation"/>
    <property type="evidence" value="ECO:0007669"/>
    <property type="project" value="TreeGrafter"/>
</dbReference>
<dbReference type="CDD" id="cd01998">
    <property type="entry name" value="MnmA_TRMU-like"/>
    <property type="match status" value="1"/>
</dbReference>
<dbReference type="FunFam" id="3.40.50.620:FF:000115">
    <property type="entry name" value="tRNA-specific 2-thiouridylase MnmA"/>
    <property type="match status" value="1"/>
</dbReference>
<dbReference type="Gene3D" id="2.30.30.280">
    <property type="entry name" value="Adenine nucleotide alpha hydrolases-like domains"/>
    <property type="match status" value="1"/>
</dbReference>
<dbReference type="Gene3D" id="3.40.50.620">
    <property type="entry name" value="HUPs"/>
    <property type="match status" value="1"/>
</dbReference>
<dbReference type="Gene3D" id="2.40.30.10">
    <property type="entry name" value="Translation factors"/>
    <property type="match status" value="1"/>
</dbReference>
<dbReference type="HAMAP" id="MF_00144">
    <property type="entry name" value="tRNA_thiouridyl_MnmA"/>
    <property type="match status" value="1"/>
</dbReference>
<dbReference type="InterPro" id="IPR004506">
    <property type="entry name" value="MnmA-like"/>
</dbReference>
<dbReference type="InterPro" id="IPR046885">
    <property type="entry name" value="MnmA-like_C"/>
</dbReference>
<dbReference type="InterPro" id="IPR046884">
    <property type="entry name" value="MnmA-like_central"/>
</dbReference>
<dbReference type="InterPro" id="IPR023382">
    <property type="entry name" value="MnmA-like_central_sf"/>
</dbReference>
<dbReference type="InterPro" id="IPR014729">
    <property type="entry name" value="Rossmann-like_a/b/a_fold"/>
</dbReference>
<dbReference type="NCBIfam" id="NF001138">
    <property type="entry name" value="PRK00143.1"/>
    <property type="match status" value="1"/>
</dbReference>
<dbReference type="NCBIfam" id="TIGR00420">
    <property type="entry name" value="trmU"/>
    <property type="match status" value="1"/>
</dbReference>
<dbReference type="PANTHER" id="PTHR11933:SF5">
    <property type="entry name" value="MITOCHONDRIAL TRNA-SPECIFIC 2-THIOURIDYLASE 1"/>
    <property type="match status" value="1"/>
</dbReference>
<dbReference type="PANTHER" id="PTHR11933">
    <property type="entry name" value="TRNA 5-METHYLAMINOMETHYL-2-THIOURIDYLATE -METHYLTRANSFERASE"/>
    <property type="match status" value="1"/>
</dbReference>
<dbReference type="Pfam" id="PF03054">
    <property type="entry name" value="tRNA_Me_trans"/>
    <property type="match status" value="1"/>
</dbReference>
<dbReference type="Pfam" id="PF20258">
    <property type="entry name" value="tRNA_Me_trans_C"/>
    <property type="match status" value="1"/>
</dbReference>
<dbReference type="Pfam" id="PF20259">
    <property type="entry name" value="tRNA_Me_trans_M"/>
    <property type="match status" value="1"/>
</dbReference>
<dbReference type="SUPFAM" id="SSF52402">
    <property type="entry name" value="Adenine nucleotide alpha hydrolases-like"/>
    <property type="match status" value="1"/>
</dbReference>
<sequence>MSKGKIIVAMSGGVDSAVTAGLLMEEGYEVIGVNLRTWEYEAPVCDTTKKSCCSPEDIRDARDVGLSLKIPFYVVKMEKVFQEKVIDRFIDDYQHGKTPNPCVECNTFVKFGALFEKAKALGIDKIATGHYARIVRNGERYAISNGVDIGKNQAYYLYGLSQENLKNVTFPLGGMTKPEVREIARRMGLSVADKAESQEICFIPENDYRKFLEKKHVEFTPGFFKLRDGRIIGKHKGRENFTIGQRKGLGIAWRNPLYVIAIEDDGSVILGEENETYAESFSVIDVNYQGFAPLGEGESFECRVQVRYRHTPIRCRITKMNEDLVVNPLEEVRGVTPGQSAVFYPLNSDYLLLGGIIRKGSIRMQVAKEESAIAFRS</sequence>